<reference key="1">
    <citation type="journal article" date="2004" name="Science">
        <title>The genomic sequence of the accidental pathogen Legionella pneumophila.</title>
        <authorList>
            <person name="Chien M."/>
            <person name="Morozova I."/>
            <person name="Shi S."/>
            <person name="Sheng H."/>
            <person name="Chen J."/>
            <person name="Gomez S.M."/>
            <person name="Asamani G."/>
            <person name="Hill K."/>
            <person name="Nuara J."/>
            <person name="Feder M."/>
            <person name="Rineer J."/>
            <person name="Greenberg J.J."/>
            <person name="Steshenko V."/>
            <person name="Park S.H."/>
            <person name="Zhao B."/>
            <person name="Teplitskaya E."/>
            <person name="Edwards J.R."/>
            <person name="Pampou S."/>
            <person name="Georghiou A."/>
            <person name="Chou I.-C."/>
            <person name="Iannuccilli W."/>
            <person name="Ulz M.E."/>
            <person name="Kim D.H."/>
            <person name="Geringer-Sameth A."/>
            <person name="Goldsberry C."/>
            <person name="Morozov P."/>
            <person name="Fischer S.G."/>
            <person name="Segal G."/>
            <person name="Qu X."/>
            <person name="Rzhetsky A."/>
            <person name="Zhang P."/>
            <person name="Cayanis E."/>
            <person name="De Jong P.J."/>
            <person name="Ju J."/>
            <person name="Kalachikov S."/>
            <person name="Shuman H.A."/>
            <person name="Russo J.J."/>
        </authorList>
    </citation>
    <scope>NUCLEOTIDE SEQUENCE [LARGE SCALE GENOMIC DNA]</scope>
    <source>
        <strain>Philadelphia 1 / ATCC 33152 / DSM 7513</strain>
    </source>
</reference>
<sequence length="289" mass="32117">MWFQLKIEHCPNDKIEEITEELEECGALSITLTDKNDNPVLEPEPGTTPLWPEVIIHALFAQAEEAQYAREQLVAKRPSLHCSLELLADKNWERAWMDDFRPQRFGNRLWVCPTWLPPPEPDAVNLILDPGLAFGTGTHATTSLCLTWLEQADLKNKSIIDYGCGSGILSLAAIKLGAKHVYAVDIDNQALQATQSNAHANHITESQLSISFPEALQNPVHLVIANILLAPLISLKERFHQLLPSGAHLVTSGILEEQAPLLIDAYDSAFTHIATEYCEGWSLLVFTSK</sequence>
<gene>
    <name evidence="1" type="primary">prmA</name>
    <name type="ordered locus">lpg0461</name>
</gene>
<proteinExistence type="inferred from homology"/>
<keyword id="KW-0963">Cytoplasm</keyword>
<keyword id="KW-0489">Methyltransferase</keyword>
<keyword id="KW-1185">Reference proteome</keyword>
<keyword id="KW-0949">S-adenosyl-L-methionine</keyword>
<keyword id="KW-0808">Transferase</keyword>
<feature type="chain" id="PRO_0000192273" description="Ribosomal protein L11 methyltransferase">
    <location>
        <begin position="1"/>
        <end position="289"/>
    </location>
</feature>
<feature type="binding site" evidence="1">
    <location>
        <position position="142"/>
    </location>
    <ligand>
        <name>S-adenosyl-L-methionine</name>
        <dbReference type="ChEBI" id="CHEBI:59789"/>
    </ligand>
</feature>
<feature type="binding site" evidence="1">
    <location>
        <position position="163"/>
    </location>
    <ligand>
        <name>S-adenosyl-L-methionine</name>
        <dbReference type="ChEBI" id="CHEBI:59789"/>
    </ligand>
</feature>
<feature type="binding site" evidence="1">
    <location>
        <position position="185"/>
    </location>
    <ligand>
        <name>S-adenosyl-L-methionine</name>
        <dbReference type="ChEBI" id="CHEBI:59789"/>
    </ligand>
</feature>
<feature type="binding site" evidence="1">
    <location>
        <position position="226"/>
    </location>
    <ligand>
        <name>S-adenosyl-L-methionine</name>
        <dbReference type="ChEBI" id="CHEBI:59789"/>
    </ligand>
</feature>
<dbReference type="EC" id="2.1.1.-" evidence="1"/>
<dbReference type="EMBL" id="AE017354">
    <property type="protein sequence ID" value="AAU26558.1"/>
    <property type="molecule type" value="Genomic_DNA"/>
</dbReference>
<dbReference type="RefSeq" id="WP_010946210.1">
    <property type="nucleotide sequence ID" value="NC_002942.5"/>
</dbReference>
<dbReference type="RefSeq" id="YP_094505.1">
    <property type="nucleotide sequence ID" value="NC_002942.5"/>
</dbReference>
<dbReference type="SMR" id="Q5ZYB1"/>
<dbReference type="STRING" id="272624.lpg0461"/>
<dbReference type="PaxDb" id="272624-lpg0461"/>
<dbReference type="GeneID" id="57034463"/>
<dbReference type="KEGG" id="lpn:lpg0461"/>
<dbReference type="PATRIC" id="fig|272624.6.peg.477"/>
<dbReference type="eggNOG" id="COG2264">
    <property type="taxonomic scope" value="Bacteria"/>
</dbReference>
<dbReference type="HOGENOM" id="CLU_049382_4_1_6"/>
<dbReference type="OrthoDB" id="9785995at2"/>
<dbReference type="Proteomes" id="UP000000609">
    <property type="component" value="Chromosome"/>
</dbReference>
<dbReference type="GO" id="GO:0005829">
    <property type="term" value="C:cytosol"/>
    <property type="evidence" value="ECO:0007669"/>
    <property type="project" value="TreeGrafter"/>
</dbReference>
<dbReference type="GO" id="GO:0016279">
    <property type="term" value="F:protein-lysine N-methyltransferase activity"/>
    <property type="evidence" value="ECO:0007669"/>
    <property type="project" value="TreeGrafter"/>
</dbReference>
<dbReference type="GO" id="GO:0032259">
    <property type="term" value="P:methylation"/>
    <property type="evidence" value="ECO:0007669"/>
    <property type="project" value="UniProtKB-KW"/>
</dbReference>
<dbReference type="CDD" id="cd02440">
    <property type="entry name" value="AdoMet_MTases"/>
    <property type="match status" value="1"/>
</dbReference>
<dbReference type="Gene3D" id="3.40.50.150">
    <property type="entry name" value="Vaccinia Virus protein VP39"/>
    <property type="match status" value="1"/>
</dbReference>
<dbReference type="HAMAP" id="MF_00735">
    <property type="entry name" value="Methyltr_PrmA"/>
    <property type="match status" value="1"/>
</dbReference>
<dbReference type="InterPro" id="IPR050078">
    <property type="entry name" value="Ribosomal_L11_MeTrfase_PrmA"/>
</dbReference>
<dbReference type="InterPro" id="IPR004498">
    <property type="entry name" value="Ribosomal_PrmA_MeTrfase"/>
</dbReference>
<dbReference type="InterPro" id="IPR029063">
    <property type="entry name" value="SAM-dependent_MTases_sf"/>
</dbReference>
<dbReference type="NCBIfam" id="TIGR00406">
    <property type="entry name" value="prmA"/>
    <property type="match status" value="1"/>
</dbReference>
<dbReference type="PANTHER" id="PTHR43648">
    <property type="entry name" value="ELECTRON TRANSFER FLAVOPROTEIN BETA SUBUNIT LYSINE METHYLTRANSFERASE"/>
    <property type="match status" value="1"/>
</dbReference>
<dbReference type="PANTHER" id="PTHR43648:SF1">
    <property type="entry name" value="ELECTRON TRANSFER FLAVOPROTEIN BETA SUBUNIT LYSINE METHYLTRANSFERASE"/>
    <property type="match status" value="1"/>
</dbReference>
<dbReference type="Pfam" id="PF06325">
    <property type="entry name" value="PrmA"/>
    <property type="match status" value="1"/>
</dbReference>
<dbReference type="PIRSF" id="PIRSF000401">
    <property type="entry name" value="RPL11_MTase"/>
    <property type="match status" value="1"/>
</dbReference>
<dbReference type="SUPFAM" id="SSF53335">
    <property type="entry name" value="S-adenosyl-L-methionine-dependent methyltransferases"/>
    <property type="match status" value="1"/>
</dbReference>
<comment type="function">
    <text evidence="1">Methylates ribosomal protein L11.</text>
</comment>
<comment type="catalytic activity">
    <reaction evidence="1">
        <text>L-lysyl-[protein] + 3 S-adenosyl-L-methionine = N(6),N(6),N(6)-trimethyl-L-lysyl-[protein] + 3 S-adenosyl-L-homocysteine + 3 H(+)</text>
        <dbReference type="Rhea" id="RHEA:54192"/>
        <dbReference type="Rhea" id="RHEA-COMP:9752"/>
        <dbReference type="Rhea" id="RHEA-COMP:13826"/>
        <dbReference type="ChEBI" id="CHEBI:15378"/>
        <dbReference type="ChEBI" id="CHEBI:29969"/>
        <dbReference type="ChEBI" id="CHEBI:57856"/>
        <dbReference type="ChEBI" id="CHEBI:59789"/>
        <dbReference type="ChEBI" id="CHEBI:61961"/>
    </reaction>
</comment>
<comment type="subcellular location">
    <subcellularLocation>
        <location evidence="1">Cytoplasm</location>
    </subcellularLocation>
</comment>
<comment type="similarity">
    <text evidence="1">Belongs to the methyltransferase superfamily. PrmA family.</text>
</comment>
<organism>
    <name type="scientific">Legionella pneumophila subsp. pneumophila (strain Philadelphia 1 / ATCC 33152 / DSM 7513)</name>
    <dbReference type="NCBI Taxonomy" id="272624"/>
    <lineage>
        <taxon>Bacteria</taxon>
        <taxon>Pseudomonadati</taxon>
        <taxon>Pseudomonadota</taxon>
        <taxon>Gammaproteobacteria</taxon>
        <taxon>Legionellales</taxon>
        <taxon>Legionellaceae</taxon>
        <taxon>Legionella</taxon>
    </lineage>
</organism>
<protein>
    <recommendedName>
        <fullName evidence="1">Ribosomal protein L11 methyltransferase</fullName>
        <shortName evidence="1">L11 Mtase</shortName>
        <ecNumber evidence="1">2.1.1.-</ecNumber>
    </recommendedName>
</protein>
<name>PRMA_LEGPH</name>
<accession>Q5ZYB1</accession>
<evidence type="ECO:0000255" key="1">
    <source>
        <dbReference type="HAMAP-Rule" id="MF_00735"/>
    </source>
</evidence>